<feature type="chain" id="PRO_0000112749" description="Acetylornithine aminotransferase">
    <location>
        <begin position="1"/>
        <end position="389"/>
    </location>
</feature>
<feature type="binding site" evidence="1">
    <location>
        <begin position="96"/>
        <end position="97"/>
    </location>
    <ligand>
        <name>pyridoxal 5'-phosphate</name>
        <dbReference type="ChEBI" id="CHEBI:597326"/>
    </ligand>
</feature>
<feature type="binding site" evidence="1">
    <location>
        <position position="123"/>
    </location>
    <ligand>
        <name>pyridoxal 5'-phosphate</name>
        <dbReference type="ChEBI" id="CHEBI:597326"/>
    </ligand>
</feature>
<feature type="binding site" evidence="1">
    <location>
        <position position="126"/>
    </location>
    <ligand>
        <name>N(2)-acetyl-L-ornithine</name>
        <dbReference type="ChEBI" id="CHEBI:57805"/>
    </ligand>
</feature>
<feature type="binding site" evidence="1">
    <location>
        <begin position="207"/>
        <end position="210"/>
    </location>
    <ligand>
        <name>pyridoxal 5'-phosphate</name>
        <dbReference type="ChEBI" id="CHEBI:597326"/>
    </ligand>
</feature>
<feature type="binding site" evidence="1">
    <location>
        <position position="264"/>
    </location>
    <ligand>
        <name>N(2)-acetyl-L-ornithine</name>
        <dbReference type="ChEBI" id="CHEBI:57805"/>
    </ligand>
</feature>
<feature type="binding site" evidence="1">
    <location>
        <position position="265"/>
    </location>
    <ligand>
        <name>pyridoxal 5'-phosphate</name>
        <dbReference type="ChEBI" id="CHEBI:597326"/>
    </ligand>
</feature>
<feature type="modified residue" description="N6-(pyridoxal phosphate)lysine" evidence="1">
    <location>
        <position position="236"/>
    </location>
</feature>
<feature type="sequence conflict" description="In Ref. 1; CAA68242." evidence="2" ref="1">
    <original>C</original>
    <variation>R</variation>
    <location>
        <position position="278"/>
    </location>
</feature>
<feature type="sequence conflict" description="In Ref. 1; CAA68242." evidence="2" ref="1">
    <original>P</original>
    <variation>T</variation>
    <location>
        <position position="281"/>
    </location>
</feature>
<evidence type="ECO:0000255" key="1">
    <source>
        <dbReference type="HAMAP-Rule" id="MF_01107"/>
    </source>
</evidence>
<evidence type="ECO:0000305" key="2"/>
<gene>
    <name evidence="1" type="primary">argD</name>
    <name type="ordered locus">lp_0531</name>
</gene>
<proteinExistence type="inferred from homology"/>
<sequence>MTMQHVFPTYQRFPFAITDGQGVHLTDNHGKTYLDFTAGIGVCNFGYHQPQIQAAVTQQLTHIWHTSNLYENELQDAVAGLLANGEERLVYFANSGTEANEAALKLARKYTGKTGILAFQHSFHGRTYGAMSMTGNPHIQAGYAPLVPGITFATYNDDAALDKITPELAAVILEVVQGEGGVFAGQTAWLQAVNAKCQATGVLLIIDEVQTGIGRTGYRMAYEGYGLDPDIYTVAKGLANGLPVGAMVGRRQLATAFGPGSHGSTFAGNAVAMAAAKCVLPQLTPALLTTVRAHAKLVWQSLATQVEPIPVVKQITGKGLMIGIHLDEQIPVNQVITRLQVEGLLTLSAGDNTLRLLPPIVMQPADLLAGIALIAKVLTTLTTEVTTNE</sequence>
<comment type="catalytic activity">
    <reaction evidence="1">
        <text>N(2)-acetyl-L-ornithine + 2-oxoglutarate = N-acetyl-L-glutamate 5-semialdehyde + L-glutamate</text>
        <dbReference type="Rhea" id="RHEA:18049"/>
        <dbReference type="ChEBI" id="CHEBI:16810"/>
        <dbReference type="ChEBI" id="CHEBI:29123"/>
        <dbReference type="ChEBI" id="CHEBI:29985"/>
        <dbReference type="ChEBI" id="CHEBI:57805"/>
        <dbReference type="EC" id="2.6.1.11"/>
    </reaction>
</comment>
<comment type="cofactor">
    <cofactor evidence="1">
        <name>pyridoxal 5'-phosphate</name>
        <dbReference type="ChEBI" id="CHEBI:597326"/>
    </cofactor>
    <text evidence="1">Binds 1 pyridoxal phosphate per subunit.</text>
</comment>
<comment type="pathway">
    <text evidence="1">Amino-acid biosynthesis; L-arginine biosynthesis; N(2)-acetyl-L-ornithine from L-glutamate: step 4/4.</text>
</comment>
<comment type="subunit">
    <text evidence="1">Homodimer.</text>
</comment>
<comment type="subcellular location">
    <subcellularLocation>
        <location evidence="1">Cytoplasm</location>
    </subcellularLocation>
</comment>
<comment type="miscellaneous">
    <text evidence="1">May also have succinyldiaminopimelate aminotransferase activity, thus carrying out the corresponding step in lysine biosynthesis.</text>
</comment>
<comment type="similarity">
    <text evidence="1">Belongs to the class-III pyridoxal-phosphate-dependent aminotransferase family. ArgD subfamily.</text>
</comment>
<accession>O08321</accession>
<accession>F9UL06</accession>
<dbReference type="EC" id="2.6.1.11" evidence="1"/>
<dbReference type="EMBL" id="X99978">
    <property type="protein sequence ID" value="CAA68242.1"/>
    <property type="molecule type" value="Genomic_DNA"/>
</dbReference>
<dbReference type="EMBL" id="AL935263">
    <property type="protein sequence ID" value="CCC78021.1"/>
    <property type="molecule type" value="Genomic_DNA"/>
</dbReference>
<dbReference type="RefSeq" id="WP_011101045.1">
    <property type="nucleotide sequence ID" value="NC_004567.2"/>
</dbReference>
<dbReference type="RefSeq" id="YP_004888535.1">
    <property type="nucleotide sequence ID" value="NC_004567.2"/>
</dbReference>
<dbReference type="SMR" id="O08321"/>
<dbReference type="STRING" id="220668.lp_0531"/>
<dbReference type="EnsemblBacteria" id="CCC78021">
    <property type="protein sequence ID" value="CCC78021"/>
    <property type="gene ID" value="lp_0531"/>
</dbReference>
<dbReference type="KEGG" id="lpl:lp_0531"/>
<dbReference type="PATRIC" id="fig|220668.9.peg.439"/>
<dbReference type="eggNOG" id="COG4992">
    <property type="taxonomic scope" value="Bacteria"/>
</dbReference>
<dbReference type="HOGENOM" id="CLU_016922_10_1_9"/>
<dbReference type="OrthoDB" id="9807885at2"/>
<dbReference type="PhylomeDB" id="O08321"/>
<dbReference type="UniPathway" id="UPA00068">
    <property type="reaction ID" value="UER00109"/>
</dbReference>
<dbReference type="Proteomes" id="UP000000432">
    <property type="component" value="Chromosome"/>
</dbReference>
<dbReference type="GO" id="GO:0005737">
    <property type="term" value="C:cytoplasm"/>
    <property type="evidence" value="ECO:0007669"/>
    <property type="project" value="UniProtKB-SubCell"/>
</dbReference>
<dbReference type="GO" id="GO:0042802">
    <property type="term" value="F:identical protein binding"/>
    <property type="evidence" value="ECO:0007669"/>
    <property type="project" value="TreeGrafter"/>
</dbReference>
<dbReference type="GO" id="GO:0003992">
    <property type="term" value="F:N2-acetyl-L-ornithine:2-oxoglutarate 5-aminotransferase activity"/>
    <property type="evidence" value="ECO:0007669"/>
    <property type="project" value="UniProtKB-UniRule"/>
</dbReference>
<dbReference type="GO" id="GO:0030170">
    <property type="term" value="F:pyridoxal phosphate binding"/>
    <property type="evidence" value="ECO:0007669"/>
    <property type="project" value="InterPro"/>
</dbReference>
<dbReference type="GO" id="GO:0006526">
    <property type="term" value="P:L-arginine biosynthetic process"/>
    <property type="evidence" value="ECO:0007669"/>
    <property type="project" value="UniProtKB-UniRule"/>
</dbReference>
<dbReference type="CDD" id="cd00610">
    <property type="entry name" value="OAT_like"/>
    <property type="match status" value="1"/>
</dbReference>
<dbReference type="FunFam" id="3.40.640.10:FF:000004">
    <property type="entry name" value="Acetylornithine aminotransferase"/>
    <property type="match status" value="1"/>
</dbReference>
<dbReference type="Gene3D" id="3.90.1150.10">
    <property type="entry name" value="Aspartate Aminotransferase, domain 1"/>
    <property type="match status" value="1"/>
</dbReference>
<dbReference type="Gene3D" id="3.40.640.10">
    <property type="entry name" value="Type I PLP-dependent aspartate aminotransferase-like (Major domain)"/>
    <property type="match status" value="1"/>
</dbReference>
<dbReference type="HAMAP" id="MF_01107">
    <property type="entry name" value="ArgD_aminotrans_3"/>
    <property type="match status" value="1"/>
</dbReference>
<dbReference type="InterPro" id="IPR004636">
    <property type="entry name" value="AcOrn/SuccOrn_fam"/>
</dbReference>
<dbReference type="InterPro" id="IPR005814">
    <property type="entry name" value="Aminotrans_3"/>
</dbReference>
<dbReference type="InterPro" id="IPR049704">
    <property type="entry name" value="Aminotrans_3_PPA_site"/>
</dbReference>
<dbReference type="InterPro" id="IPR050103">
    <property type="entry name" value="Class-III_PLP-dep_AT"/>
</dbReference>
<dbReference type="InterPro" id="IPR015424">
    <property type="entry name" value="PyrdxlP-dep_Trfase"/>
</dbReference>
<dbReference type="InterPro" id="IPR015421">
    <property type="entry name" value="PyrdxlP-dep_Trfase_major"/>
</dbReference>
<dbReference type="InterPro" id="IPR015422">
    <property type="entry name" value="PyrdxlP-dep_Trfase_small"/>
</dbReference>
<dbReference type="NCBIfam" id="TIGR00707">
    <property type="entry name" value="argD"/>
    <property type="match status" value="1"/>
</dbReference>
<dbReference type="NCBIfam" id="NF002797">
    <property type="entry name" value="PRK02936.1"/>
    <property type="match status" value="1"/>
</dbReference>
<dbReference type="PANTHER" id="PTHR11986:SF79">
    <property type="entry name" value="ACETYLORNITHINE AMINOTRANSFERASE, MITOCHONDRIAL"/>
    <property type="match status" value="1"/>
</dbReference>
<dbReference type="PANTHER" id="PTHR11986">
    <property type="entry name" value="AMINOTRANSFERASE CLASS III"/>
    <property type="match status" value="1"/>
</dbReference>
<dbReference type="Pfam" id="PF00202">
    <property type="entry name" value="Aminotran_3"/>
    <property type="match status" value="1"/>
</dbReference>
<dbReference type="PIRSF" id="PIRSF000521">
    <property type="entry name" value="Transaminase_4ab_Lys_Orn"/>
    <property type="match status" value="1"/>
</dbReference>
<dbReference type="SUPFAM" id="SSF53383">
    <property type="entry name" value="PLP-dependent transferases"/>
    <property type="match status" value="1"/>
</dbReference>
<dbReference type="PROSITE" id="PS00600">
    <property type="entry name" value="AA_TRANSFER_CLASS_3"/>
    <property type="match status" value="1"/>
</dbReference>
<name>ARGD_LACPL</name>
<keyword id="KW-0028">Amino-acid biosynthesis</keyword>
<keyword id="KW-0032">Aminotransferase</keyword>
<keyword id="KW-0055">Arginine biosynthesis</keyword>
<keyword id="KW-0963">Cytoplasm</keyword>
<keyword id="KW-0663">Pyridoxal phosphate</keyword>
<keyword id="KW-1185">Reference proteome</keyword>
<keyword id="KW-0808">Transferase</keyword>
<organism>
    <name type="scientific">Lactiplantibacillus plantarum (strain ATCC BAA-793 / NCIMB 8826 / WCFS1)</name>
    <name type="common">Lactobacillus plantarum</name>
    <dbReference type="NCBI Taxonomy" id="220668"/>
    <lineage>
        <taxon>Bacteria</taxon>
        <taxon>Bacillati</taxon>
        <taxon>Bacillota</taxon>
        <taxon>Bacilli</taxon>
        <taxon>Lactobacillales</taxon>
        <taxon>Lactobacillaceae</taxon>
        <taxon>Lactiplantibacillus</taxon>
    </lineage>
</organism>
<reference key="1">
    <citation type="journal article" date="1997" name="J. Bacteriol.">
        <title>Arginine biosynthesis and regulation in Lactobacillus plantarum: the carA gene and the argCJBDF cluster are divergently transcribed.</title>
        <authorList>
            <person name="Bringel F."/>
            <person name="Frey L."/>
            <person name="Boivin S."/>
            <person name="Hubert J.-C."/>
        </authorList>
    </citation>
    <scope>NUCLEOTIDE SEQUENCE [GENOMIC DNA]</scope>
    <source>
        <strain>ATCC 8014 / CCM 1904 / DSM 20205 / NCDO 82 / NCIB 6376</strain>
    </source>
</reference>
<reference key="2">
    <citation type="journal article" date="2003" name="Proc. Natl. Acad. Sci. U.S.A.">
        <title>Complete genome sequence of Lactobacillus plantarum WCFS1.</title>
        <authorList>
            <person name="Kleerebezem M."/>
            <person name="Boekhorst J."/>
            <person name="van Kranenburg R."/>
            <person name="Molenaar D."/>
            <person name="Kuipers O.P."/>
            <person name="Leer R."/>
            <person name="Tarchini R."/>
            <person name="Peters S.A."/>
            <person name="Sandbrink H.M."/>
            <person name="Fiers M.W.E.J."/>
            <person name="Stiekema W."/>
            <person name="Klein Lankhorst R.M."/>
            <person name="Bron P.A."/>
            <person name="Hoffer S.M."/>
            <person name="Nierop Groot M.N."/>
            <person name="Kerkhoven R."/>
            <person name="De Vries M."/>
            <person name="Ursing B."/>
            <person name="De Vos W.M."/>
            <person name="Siezen R.J."/>
        </authorList>
    </citation>
    <scope>NUCLEOTIDE SEQUENCE [LARGE SCALE GENOMIC DNA]</scope>
    <source>
        <strain>ATCC BAA-793 / NCIMB 8826 / WCFS1</strain>
    </source>
</reference>
<reference key="3">
    <citation type="journal article" date="2012" name="J. Bacteriol.">
        <title>Complete resequencing and reannotation of the Lactobacillus plantarum WCFS1 genome.</title>
        <authorList>
            <person name="Siezen R.J."/>
            <person name="Francke C."/>
            <person name="Renckens B."/>
            <person name="Boekhorst J."/>
            <person name="Wels M."/>
            <person name="Kleerebezem M."/>
            <person name="van Hijum S.A."/>
        </authorList>
    </citation>
    <scope>NUCLEOTIDE SEQUENCE [LARGE SCALE GENOMIC DNA]</scope>
    <scope>GENOME REANNOTATION</scope>
    <source>
        <strain>ATCC BAA-793 / NCIMB 8826 / WCFS1</strain>
    </source>
</reference>
<protein>
    <recommendedName>
        <fullName evidence="1">Acetylornithine aminotransferase</fullName>
        <shortName evidence="1">ACOAT</shortName>
        <ecNumber evidence="1">2.6.1.11</ecNumber>
    </recommendedName>
</protein>